<reference key="1">
    <citation type="journal article" date="2009" name="PLoS ONE">
        <title>Salmonella paratyphi C: genetic divergence from Salmonella choleraesuis and pathogenic convergence with Salmonella typhi.</title>
        <authorList>
            <person name="Liu W.-Q."/>
            <person name="Feng Y."/>
            <person name="Wang Y."/>
            <person name="Zou Q.-H."/>
            <person name="Chen F."/>
            <person name="Guo J.-T."/>
            <person name="Peng Y.-H."/>
            <person name="Jin Y."/>
            <person name="Li Y.-G."/>
            <person name="Hu S.-N."/>
            <person name="Johnston R.N."/>
            <person name="Liu G.-R."/>
            <person name="Liu S.-L."/>
        </authorList>
    </citation>
    <scope>NUCLEOTIDE SEQUENCE [LARGE SCALE GENOMIC DNA]</scope>
    <source>
        <strain>RKS4594</strain>
    </source>
</reference>
<keyword id="KW-0067">ATP-binding</keyword>
<keyword id="KW-0963">Cytoplasm</keyword>
<keyword id="KW-0418">Kinase</keyword>
<keyword id="KW-0545">Nucleotide biosynthesis</keyword>
<keyword id="KW-0547">Nucleotide-binding</keyword>
<keyword id="KW-0808">Transferase</keyword>
<comment type="function">
    <text evidence="1">Catalyzes the reversible transfer of the terminal phosphate group between ATP and AMP. Plays an important role in cellular energy homeostasis and in adenine nucleotide metabolism.</text>
</comment>
<comment type="catalytic activity">
    <reaction evidence="1">
        <text>AMP + ATP = 2 ADP</text>
        <dbReference type="Rhea" id="RHEA:12973"/>
        <dbReference type="ChEBI" id="CHEBI:30616"/>
        <dbReference type="ChEBI" id="CHEBI:456215"/>
        <dbReference type="ChEBI" id="CHEBI:456216"/>
        <dbReference type="EC" id="2.7.4.3"/>
    </reaction>
</comment>
<comment type="pathway">
    <text evidence="1">Purine metabolism; AMP biosynthesis via salvage pathway; AMP from ADP: step 1/1.</text>
</comment>
<comment type="subunit">
    <text evidence="1">Monomer.</text>
</comment>
<comment type="subcellular location">
    <subcellularLocation>
        <location evidence="1">Cytoplasm</location>
    </subcellularLocation>
</comment>
<comment type="domain">
    <text evidence="1">Consists of three domains, a large central CORE domain and two small peripheral domains, NMPbind and LID, which undergo movements during catalysis. The LID domain closes over the site of phosphoryl transfer upon ATP binding. Assembling and dissambling the active center during each catalytic cycle provides an effective means to prevent ATP hydrolysis.</text>
</comment>
<comment type="similarity">
    <text evidence="1">Belongs to the adenylate kinase family.</text>
</comment>
<evidence type="ECO:0000255" key="1">
    <source>
        <dbReference type="HAMAP-Rule" id="MF_00235"/>
    </source>
</evidence>
<sequence>MRIILLGAPGAGKGTQAQFIMEKYGIPQISTGDMLRAAVKSGSELGKQAKDIMDAGKLVTDELVIALVKERIAQEDCRNGFLLDGFPRTIPQADAMKEAGIVVDYVLEFDVPDELIVDRIVGRRVHAASGRVYHVKFNPPKVEGKDDVTGEDLTTRKDDQEETVRKRLVEYHQMTAPLIGYYQKEAEAGNTKYAKVDGTQAVADVRAALEKILG</sequence>
<name>KAD_SALPC</name>
<accession>C0Q812</accession>
<dbReference type="EC" id="2.7.4.3" evidence="1"/>
<dbReference type="EMBL" id="CP000857">
    <property type="protein sequence ID" value="ACN44682.1"/>
    <property type="molecule type" value="Genomic_DNA"/>
</dbReference>
<dbReference type="RefSeq" id="WP_001220237.1">
    <property type="nucleotide sequence ID" value="NC_012125.1"/>
</dbReference>
<dbReference type="SMR" id="C0Q812"/>
<dbReference type="KEGG" id="sei:SPC_0502"/>
<dbReference type="HOGENOM" id="CLU_032354_1_2_6"/>
<dbReference type="UniPathway" id="UPA00588">
    <property type="reaction ID" value="UER00649"/>
</dbReference>
<dbReference type="Proteomes" id="UP000001599">
    <property type="component" value="Chromosome"/>
</dbReference>
<dbReference type="GO" id="GO:0005737">
    <property type="term" value="C:cytoplasm"/>
    <property type="evidence" value="ECO:0007669"/>
    <property type="project" value="UniProtKB-SubCell"/>
</dbReference>
<dbReference type="GO" id="GO:0004017">
    <property type="term" value="F:adenylate kinase activity"/>
    <property type="evidence" value="ECO:0007669"/>
    <property type="project" value="UniProtKB-UniRule"/>
</dbReference>
<dbReference type="GO" id="GO:0005524">
    <property type="term" value="F:ATP binding"/>
    <property type="evidence" value="ECO:0007669"/>
    <property type="project" value="UniProtKB-UniRule"/>
</dbReference>
<dbReference type="GO" id="GO:0044209">
    <property type="term" value="P:AMP salvage"/>
    <property type="evidence" value="ECO:0007669"/>
    <property type="project" value="UniProtKB-UniRule"/>
</dbReference>
<dbReference type="CDD" id="cd01428">
    <property type="entry name" value="ADK"/>
    <property type="match status" value="1"/>
</dbReference>
<dbReference type="FunFam" id="3.40.50.300:FF:000106">
    <property type="entry name" value="Adenylate kinase mitochondrial"/>
    <property type="match status" value="1"/>
</dbReference>
<dbReference type="Gene3D" id="3.40.50.300">
    <property type="entry name" value="P-loop containing nucleotide triphosphate hydrolases"/>
    <property type="match status" value="1"/>
</dbReference>
<dbReference type="HAMAP" id="MF_00235">
    <property type="entry name" value="Adenylate_kinase_Adk"/>
    <property type="match status" value="1"/>
</dbReference>
<dbReference type="InterPro" id="IPR006259">
    <property type="entry name" value="Adenyl_kin_sub"/>
</dbReference>
<dbReference type="InterPro" id="IPR000850">
    <property type="entry name" value="Adenylat/UMP-CMP_kin"/>
</dbReference>
<dbReference type="InterPro" id="IPR033690">
    <property type="entry name" value="Adenylat_kinase_CS"/>
</dbReference>
<dbReference type="InterPro" id="IPR007862">
    <property type="entry name" value="Adenylate_kinase_lid-dom"/>
</dbReference>
<dbReference type="InterPro" id="IPR027417">
    <property type="entry name" value="P-loop_NTPase"/>
</dbReference>
<dbReference type="NCBIfam" id="TIGR01351">
    <property type="entry name" value="adk"/>
    <property type="match status" value="1"/>
</dbReference>
<dbReference type="NCBIfam" id="NF001379">
    <property type="entry name" value="PRK00279.1-1"/>
    <property type="match status" value="1"/>
</dbReference>
<dbReference type="NCBIfam" id="NF001380">
    <property type="entry name" value="PRK00279.1-2"/>
    <property type="match status" value="1"/>
</dbReference>
<dbReference type="NCBIfam" id="NF001381">
    <property type="entry name" value="PRK00279.1-3"/>
    <property type="match status" value="1"/>
</dbReference>
<dbReference type="NCBIfam" id="NF011100">
    <property type="entry name" value="PRK14527.1"/>
    <property type="match status" value="1"/>
</dbReference>
<dbReference type="PANTHER" id="PTHR23359">
    <property type="entry name" value="NUCLEOTIDE KINASE"/>
    <property type="match status" value="1"/>
</dbReference>
<dbReference type="Pfam" id="PF00406">
    <property type="entry name" value="ADK"/>
    <property type="match status" value="1"/>
</dbReference>
<dbReference type="Pfam" id="PF05191">
    <property type="entry name" value="ADK_lid"/>
    <property type="match status" value="1"/>
</dbReference>
<dbReference type="PRINTS" id="PR00094">
    <property type="entry name" value="ADENYLTKNASE"/>
</dbReference>
<dbReference type="SUPFAM" id="SSF52540">
    <property type="entry name" value="P-loop containing nucleoside triphosphate hydrolases"/>
    <property type="match status" value="1"/>
</dbReference>
<dbReference type="PROSITE" id="PS00113">
    <property type="entry name" value="ADENYLATE_KINASE"/>
    <property type="match status" value="1"/>
</dbReference>
<protein>
    <recommendedName>
        <fullName evidence="1">Adenylate kinase</fullName>
        <shortName evidence="1">AK</shortName>
        <ecNumber evidence="1">2.7.4.3</ecNumber>
    </recommendedName>
    <alternativeName>
        <fullName evidence="1">ATP-AMP transphosphorylase</fullName>
    </alternativeName>
    <alternativeName>
        <fullName evidence="1">ATP:AMP phosphotransferase</fullName>
    </alternativeName>
    <alternativeName>
        <fullName evidence="1">Adenylate monophosphate kinase</fullName>
    </alternativeName>
</protein>
<organism>
    <name type="scientific">Salmonella paratyphi C (strain RKS4594)</name>
    <dbReference type="NCBI Taxonomy" id="476213"/>
    <lineage>
        <taxon>Bacteria</taxon>
        <taxon>Pseudomonadati</taxon>
        <taxon>Pseudomonadota</taxon>
        <taxon>Gammaproteobacteria</taxon>
        <taxon>Enterobacterales</taxon>
        <taxon>Enterobacteriaceae</taxon>
        <taxon>Salmonella</taxon>
    </lineage>
</organism>
<gene>
    <name evidence="1" type="primary">adk</name>
    <name type="ordered locus">SPC_0502</name>
</gene>
<proteinExistence type="inferred from homology"/>
<feature type="chain" id="PRO_1000191164" description="Adenylate kinase">
    <location>
        <begin position="1"/>
        <end position="214"/>
    </location>
</feature>
<feature type="region of interest" description="NMP" evidence="1">
    <location>
        <begin position="30"/>
        <end position="59"/>
    </location>
</feature>
<feature type="region of interest" description="LID">
    <location>
        <begin position="122"/>
        <end position="159"/>
    </location>
</feature>
<feature type="binding site" evidence="1">
    <location>
        <begin position="10"/>
        <end position="15"/>
    </location>
    <ligand>
        <name>ATP</name>
        <dbReference type="ChEBI" id="CHEBI:30616"/>
    </ligand>
</feature>
<feature type="binding site" evidence="1">
    <location>
        <position position="31"/>
    </location>
    <ligand>
        <name>AMP</name>
        <dbReference type="ChEBI" id="CHEBI:456215"/>
    </ligand>
</feature>
<feature type="binding site" evidence="1">
    <location>
        <position position="36"/>
    </location>
    <ligand>
        <name>AMP</name>
        <dbReference type="ChEBI" id="CHEBI:456215"/>
    </ligand>
</feature>
<feature type="binding site" evidence="1">
    <location>
        <begin position="57"/>
        <end position="59"/>
    </location>
    <ligand>
        <name>AMP</name>
        <dbReference type="ChEBI" id="CHEBI:456215"/>
    </ligand>
</feature>
<feature type="binding site" evidence="1">
    <location>
        <begin position="85"/>
        <end position="88"/>
    </location>
    <ligand>
        <name>AMP</name>
        <dbReference type="ChEBI" id="CHEBI:456215"/>
    </ligand>
</feature>
<feature type="binding site" evidence="1">
    <location>
        <position position="92"/>
    </location>
    <ligand>
        <name>AMP</name>
        <dbReference type="ChEBI" id="CHEBI:456215"/>
    </ligand>
</feature>
<feature type="binding site" evidence="1">
    <location>
        <position position="123"/>
    </location>
    <ligand>
        <name>ATP</name>
        <dbReference type="ChEBI" id="CHEBI:30616"/>
    </ligand>
</feature>
<feature type="binding site" evidence="1">
    <location>
        <begin position="132"/>
        <end position="133"/>
    </location>
    <ligand>
        <name>ATP</name>
        <dbReference type="ChEBI" id="CHEBI:30616"/>
    </ligand>
</feature>
<feature type="binding site" evidence="1">
    <location>
        <position position="156"/>
    </location>
    <ligand>
        <name>AMP</name>
        <dbReference type="ChEBI" id="CHEBI:456215"/>
    </ligand>
</feature>
<feature type="binding site" evidence="1">
    <location>
        <position position="167"/>
    </location>
    <ligand>
        <name>AMP</name>
        <dbReference type="ChEBI" id="CHEBI:456215"/>
    </ligand>
</feature>
<feature type="binding site" evidence="1">
    <location>
        <position position="200"/>
    </location>
    <ligand>
        <name>ATP</name>
        <dbReference type="ChEBI" id="CHEBI:30616"/>
    </ligand>
</feature>